<comment type="function">
    <text evidence="1 6">The production of the second messenger molecules diacylglycerol (DAG) and inositol 1,4,5-trisphosphate (IP3) is mediated by activated phosphatidylinositol-specific phospholipase C enzymes.</text>
</comment>
<comment type="catalytic activity">
    <reaction>
        <text>a 1,2-diacyl-sn-glycero-3-phospho-(1D-myo-inositol-4,5-bisphosphate) + H2O = 1D-myo-inositol 1,4,5-trisphosphate + a 1,2-diacyl-sn-glycerol + H(+)</text>
        <dbReference type="Rhea" id="RHEA:33179"/>
        <dbReference type="ChEBI" id="CHEBI:15377"/>
        <dbReference type="ChEBI" id="CHEBI:15378"/>
        <dbReference type="ChEBI" id="CHEBI:17815"/>
        <dbReference type="ChEBI" id="CHEBI:58456"/>
        <dbReference type="ChEBI" id="CHEBI:203600"/>
        <dbReference type="EC" id="3.1.4.11"/>
    </reaction>
</comment>
<comment type="cofactor">
    <cofactor>
        <name>Ca(2+)</name>
        <dbReference type="ChEBI" id="CHEBI:29108"/>
    </cofactor>
</comment>
<comment type="subcellular location">
    <subcellularLocation>
        <location evidence="1">Cell membrane</location>
        <topology evidence="1">Peripheral membrane protein</topology>
    </subcellularLocation>
</comment>
<comment type="alternative products">
    <event type="alternative splicing"/>
    <isoform>
        <id>Q9LY51-1</id>
        <name>1</name>
        <sequence type="displayed"/>
    </isoform>
    <isoform>
        <id>Q9LY51-2</id>
        <name>2</name>
        <sequence type="described" ref="VSP_032149 VSP_032150"/>
    </isoform>
</comment>
<comment type="tissue specificity">
    <text evidence="6">Expressed in leaves, roots, flowers and siliques.</text>
</comment>
<comment type="miscellaneous">
    <molecule>Isoform 2</molecule>
    <text evidence="8">Potentially inactive.</text>
</comment>
<name>PLCD7_ARATH</name>
<feature type="chain" id="PRO_0000324132" description="Phosphoinositide phospholipase C 7">
    <location>
        <begin position="1"/>
        <end position="584"/>
    </location>
</feature>
<feature type="domain" description="EF-hand-like">
    <location>
        <begin position="26"/>
        <end position="102"/>
    </location>
</feature>
<feature type="domain" description="PI-PLC X-box" evidence="3">
    <location>
        <begin position="103"/>
        <end position="248"/>
    </location>
</feature>
<feature type="domain" description="PI-PLC Y-box" evidence="4">
    <location>
        <begin position="323"/>
        <end position="439"/>
    </location>
</feature>
<feature type="domain" description="C2" evidence="2">
    <location>
        <begin position="433"/>
        <end position="566"/>
    </location>
</feature>
<feature type="region of interest" description="Disordered" evidence="5">
    <location>
        <begin position="285"/>
        <end position="318"/>
    </location>
</feature>
<feature type="compositionally biased region" description="Acidic residues" evidence="5">
    <location>
        <begin position="294"/>
        <end position="311"/>
    </location>
</feature>
<feature type="active site" evidence="3">
    <location>
        <position position="118"/>
    </location>
</feature>
<feature type="active site" evidence="3">
    <location>
        <position position="164"/>
    </location>
</feature>
<feature type="modified residue" description="Phosphoserine" evidence="9">
    <location>
        <position position="287"/>
    </location>
</feature>
<feature type="splice variant" id="VSP_032149" description="In isoform 2." evidence="7">
    <original>MVT</original>
    <variation>GNV</variation>
    <location>
        <begin position="212"/>
        <end position="214"/>
    </location>
</feature>
<feature type="splice variant" id="VSP_032150" description="In isoform 2." evidence="7">
    <location>
        <begin position="215"/>
        <end position="584"/>
    </location>
</feature>
<dbReference type="EC" id="3.1.4.11"/>
<dbReference type="EMBL" id="AL163832">
    <property type="protein sequence ID" value="CAB87848.1"/>
    <property type="molecule type" value="Genomic_DNA"/>
</dbReference>
<dbReference type="EMBL" id="CP002686">
    <property type="protein sequence ID" value="AEE79459.1"/>
    <property type="molecule type" value="Genomic_DNA"/>
</dbReference>
<dbReference type="PIR" id="T49206">
    <property type="entry name" value="T49206"/>
</dbReference>
<dbReference type="RefSeq" id="NP_191153.1">
    <molecule id="Q9LY51-1"/>
    <property type="nucleotide sequence ID" value="NM_115452.2"/>
</dbReference>
<dbReference type="SMR" id="Q9LY51"/>
<dbReference type="BioGRID" id="10076">
    <property type="interactions" value="1"/>
</dbReference>
<dbReference type="FunCoup" id="Q9LY51">
    <property type="interactions" value="841"/>
</dbReference>
<dbReference type="STRING" id="3702.Q9LY51"/>
<dbReference type="iPTMnet" id="Q9LY51"/>
<dbReference type="PaxDb" id="3702-AT3G55940.1"/>
<dbReference type="ProteomicsDB" id="234920">
    <molecule id="Q9LY51-1"/>
</dbReference>
<dbReference type="EnsemblPlants" id="AT3G55940.1">
    <molecule id="Q9LY51-1"/>
    <property type="protein sequence ID" value="AT3G55940.1"/>
    <property type="gene ID" value="AT3G55940"/>
</dbReference>
<dbReference type="GeneID" id="824760"/>
<dbReference type="Gramene" id="AT3G55940.1">
    <molecule id="Q9LY51-1"/>
    <property type="protein sequence ID" value="AT3G55940.1"/>
    <property type="gene ID" value="AT3G55940"/>
</dbReference>
<dbReference type="KEGG" id="ath:AT3G55940"/>
<dbReference type="Araport" id="AT3G55940"/>
<dbReference type="TAIR" id="AT3G55940">
    <property type="gene designation" value="PLC7"/>
</dbReference>
<dbReference type="eggNOG" id="KOG0169">
    <property type="taxonomic scope" value="Eukaryota"/>
</dbReference>
<dbReference type="HOGENOM" id="CLU_002738_3_2_1"/>
<dbReference type="InParanoid" id="Q9LY51"/>
<dbReference type="OMA" id="NCQLHVE"/>
<dbReference type="PhylomeDB" id="Q9LY51"/>
<dbReference type="BioCyc" id="ARA:AT3G55940-MONOMER"/>
<dbReference type="BRENDA" id="3.1.4.11">
    <property type="organism ID" value="399"/>
</dbReference>
<dbReference type="PRO" id="PR:Q9LY51"/>
<dbReference type="Proteomes" id="UP000006548">
    <property type="component" value="Chromosome 3"/>
</dbReference>
<dbReference type="ExpressionAtlas" id="Q9LY51">
    <property type="expression patterns" value="baseline and differential"/>
</dbReference>
<dbReference type="GO" id="GO:0005886">
    <property type="term" value="C:plasma membrane"/>
    <property type="evidence" value="ECO:0007005"/>
    <property type="project" value="TAIR"/>
</dbReference>
<dbReference type="GO" id="GO:0004435">
    <property type="term" value="F:phosphatidylinositol-4,5-bisphosphate phospholipase C activity"/>
    <property type="evidence" value="ECO:0007669"/>
    <property type="project" value="UniProtKB-EC"/>
</dbReference>
<dbReference type="GO" id="GO:0035556">
    <property type="term" value="P:intracellular signal transduction"/>
    <property type="evidence" value="ECO:0007669"/>
    <property type="project" value="InterPro"/>
</dbReference>
<dbReference type="GO" id="GO:0016042">
    <property type="term" value="P:lipid catabolic process"/>
    <property type="evidence" value="ECO:0007669"/>
    <property type="project" value="UniProtKB-KW"/>
</dbReference>
<dbReference type="CDD" id="cd00275">
    <property type="entry name" value="C2_PLC_like"/>
    <property type="match status" value="1"/>
</dbReference>
<dbReference type="FunFam" id="2.60.40.150:FF:000060">
    <property type="entry name" value="Phosphoinositide phospholipase C"/>
    <property type="match status" value="1"/>
</dbReference>
<dbReference type="Gene3D" id="2.60.40.150">
    <property type="entry name" value="C2 domain"/>
    <property type="match status" value="1"/>
</dbReference>
<dbReference type="Gene3D" id="1.10.238.10">
    <property type="entry name" value="EF-hand"/>
    <property type="match status" value="1"/>
</dbReference>
<dbReference type="Gene3D" id="3.20.20.190">
    <property type="entry name" value="Phosphatidylinositol (PI) phosphodiesterase"/>
    <property type="match status" value="1"/>
</dbReference>
<dbReference type="InterPro" id="IPR000008">
    <property type="entry name" value="C2_dom"/>
</dbReference>
<dbReference type="InterPro" id="IPR035892">
    <property type="entry name" value="C2_domain_sf"/>
</dbReference>
<dbReference type="InterPro" id="IPR011992">
    <property type="entry name" value="EF-hand-dom_pair"/>
</dbReference>
<dbReference type="InterPro" id="IPR001192">
    <property type="entry name" value="PI-PLC_fam"/>
</dbReference>
<dbReference type="InterPro" id="IPR017946">
    <property type="entry name" value="PLC-like_Pdiesterase_TIM-brl"/>
</dbReference>
<dbReference type="InterPro" id="IPR015359">
    <property type="entry name" value="PLC_EF-hand-like"/>
</dbReference>
<dbReference type="InterPro" id="IPR000909">
    <property type="entry name" value="PLipase_C_PInositol-sp_X_dom"/>
</dbReference>
<dbReference type="InterPro" id="IPR001711">
    <property type="entry name" value="PLipase_C_Pinositol-sp_Y"/>
</dbReference>
<dbReference type="PANTHER" id="PTHR10336:SF156">
    <property type="entry name" value="PHOSPHOINOSITIDE PHOSPHOLIPASE C 7"/>
    <property type="match status" value="1"/>
</dbReference>
<dbReference type="PANTHER" id="PTHR10336">
    <property type="entry name" value="PHOSPHOINOSITIDE-SPECIFIC PHOSPHOLIPASE C FAMILY PROTEIN"/>
    <property type="match status" value="1"/>
</dbReference>
<dbReference type="Pfam" id="PF00168">
    <property type="entry name" value="C2"/>
    <property type="match status" value="1"/>
</dbReference>
<dbReference type="Pfam" id="PF09279">
    <property type="entry name" value="EF-hand_like"/>
    <property type="match status" value="1"/>
</dbReference>
<dbReference type="Pfam" id="PF00388">
    <property type="entry name" value="PI-PLC-X"/>
    <property type="match status" value="1"/>
</dbReference>
<dbReference type="Pfam" id="PF00387">
    <property type="entry name" value="PI-PLC-Y"/>
    <property type="match status" value="1"/>
</dbReference>
<dbReference type="PRINTS" id="PR00390">
    <property type="entry name" value="PHPHLIPASEC"/>
</dbReference>
<dbReference type="SMART" id="SM00239">
    <property type="entry name" value="C2"/>
    <property type="match status" value="1"/>
</dbReference>
<dbReference type="SMART" id="SM00148">
    <property type="entry name" value="PLCXc"/>
    <property type="match status" value="1"/>
</dbReference>
<dbReference type="SMART" id="SM00149">
    <property type="entry name" value="PLCYc"/>
    <property type="match status" value="1"/>
</dbReference>
<dbReference type="SUPFAM" id="SSF49562">
    <property type="entry name" value="C2 domain (Calcium/lipid-binding domain, CaLB)"/>
    <property type="match status" value="1"/>
</dbReference>
<dbReference type="SUPFAM" id="SSF47473">
    <property type="entry name" value="EF-hand"/>
    <property type="match status" value="1"/>
</dbReference>
<dbReference type="SUPFAM" id="SSF51695">
    <property type="entry name" value="PLC-like phosphodiesterases"/>
    <property type="match status" value="1"/>
</dbReference>
<dbReference type="PROSITE" id="PS50004">
    <property type="entry name" value="C2"/>
    <property type="match status" value="1"/>
</dbReference>
<dbReference type="PROSITE" id="PS50007">
    <property type="entry name" value="PIPLC_X_DOMAIN"/>
    <property type="match status" value="1"/>
</dbReference>
<dbReference type="PROSITE" id="PS50008">
    <property type="entry name" value="PIPLC_Y_DOMAIN"/>
    <property type="match status" value="1"/>
</dbReference>
<reference key="1">
    <citation type="journal article" date="2000" name="Nature">
        <title>Sequence and analysis of chromosome 3 of the plant Arabidopsis thaliana.</title>
        <authorList>
            <person name="Salanoubat M."/>
            <person name="Lemcke K."/>
            <person name="Rieger M."/>
            <person name="Ansorge W."/>
            <person name="Unseld M."/>
            <person name="Fartmann B."/>
            <person name="Valle G."/>
            <person name="Bloecker H."/>
            <person name="Perez-Alonso M."/>
            <person name="Obermaier B."/>
            <person name="Delseny M."/>
            <person name="Boutry M."/>
            <person name="Grivell L.A."/>
            <person name="Mache R."/>
            <person name="Puigdomenech P."/>
            <person name="De Simone V."/>
            <person name="Choisne N."/>
            <person name="Artiguenave F."/>
            <person name="Robert C."/>
            <person name="Brottier P."/>
            <person name="Wincker P."/>
            <person name="Cattolico L."/>
            <person name="Weissenbach J."/>
            <person name="Saurin W."/>
            <person name="Quetier F."/>
            <person name="Schaefer M."/>
            <person name="Mueller-Auer S."/>
            <person name="Gabel C."/>
            <person name="Fuchs M."/>
            <person name="Benes V."/>
            <person name="Wurmbach E."/>
            <person name="Drzonek H."/>
            <person name="Erfle H."/>
            <person name="Jordan N."/>
            <person name="Bangert S."/>
            <person name="Wiedelmann R."/>
            <person name="Kranz H."/>
            <person name="Voss H."/>
            <person name="Holland R."/>
            <person name="Brandt P."/>
            <person name="Nyakatura G."/>
            <person name="Vezzi A."/>
            <person name="D'Angelo M."/>
            <person name="Pallavicini A."/>
            <person name="Toppo S."/>
            <person name="Simionati B."/>
            <person name="Conrad A."/>
            <person name="Hornischer K."/>
            <person name="Kauer G."/>
            <person name="Loehnert T.-H."/>
            <person name="Nordsiek G."/>
            <person name="Reichelt J."/>
            <person name="Scharfe M."/>
            <person name="Schoen O."/>
            <person name="Bargues M."/>
            <person name="Terol J."/>
            <person name="Climent J."/>
            <person name="Navarro P."/>
            <person name="Collado C."/>
            <person name="Perez-Perez A."/>
            <person name="Ottenwaelder B."/>
            <person name="Duchemin D."/>
            <person name="Cooke R."/>
            <person name="Laudie M."/>
            <person name="Berger-Llauro C."/>
            <person name="Purnelle B."/>
            <person name="Masuy D."/>
            <person name="de Haan M."/>
            <person name="Maarse A.C."/>
            <person name="Alcaraz J.-P."/>
            <person name="Cottet A."/>
            <person name="Casacuberta E."/>
            <person name="Monfort A."/>
            <person name="Argiriou A."/>
            <person name="Flores M."/>
            <person name="Liguori R."/>
            <person name="Vitale D."/>
            <person name="Mannhaupt G."/>
            <person name="Haase D."/>
            <person name="Schoof H."/>
            <person name="Rudd S."/>
            <person name="Zaccaria P."/>
            <person name="Mewes H.-W."/>
            <person name="Mayer K.F.X."/>
            <person name="Kaul S."/>
            <person name="Town C.D."/>
            <person name="Koo H.L."/>
            <person name="Tallon L.J."/>
            <person name="Jenkins J."/>
            <person name="Rooney T."/>
            <person name="Rizzo M."/>
            <person name="Walts A."/>
            <person name="Utterback T."/>
            <person name="Fujii C.Y."/>
            <person name="Shea T.P."/>
            <person name="Creasy T.H."/>
            <person name="Haas B."/>
            <person name="Maiti R."/>
            <person name="Wu D."/>
            <person name="Peterson J."/>
            <person name="Van Aken S."/>
            <person name="Pai G."/>
            <person name="Militscher J."/>
            <person name="Sellers P."/>
            <person name="Gill J.E."/>
            <person name="Feldblyum T.V."/>
            <person name="Preuss D."/>
            <person name="Lin X."/>
            <person name="Nierman W.C."/>
            <person name="Salzberg S.L."/>
            <person name="White O."/>
            <person name="Venter J.C."/>
            <person name="Fraser C.M."/>
            <person name="Kaneko T."/>
            <person name="Nakamura Y."/>
            <person name="Sato S."/>
            <person name="Kato T."/>
            <person name="Asamizu E."/>
            <person name="Sasamoto S."/>
            <person name="Kimura T."/>
            <person name="Idesawa K."/>
            <person name="Kawashima K."/>
            <person name="Kishida Y."/>
            <person name="Kiyokawa C."/>
            <person name="Kohara M."/>
            <person name="Matsumoto M."/>
            <person name="Matsuno A."/>
            <person name="Muraki A."/>
            <person name="Nakayama S."/>
            <person name="Nakazaki N."/>
            <person name="Shinpo S."/>
            <person name="Takeuchi C."/>
            <person name="Wada T."/>
            <person name="Watanabe A."/>
            <person name="Yamada M."/>
            <person name="Yasuda M."/>
            <person name="Tabata S."/>
        </authorList>
    </citation>
    <scope>NUCLEOTIDE SEQUENCE [LARGE SCALE GENOMIC DNA]</scope>
    <source>
        <strain>cv. Columbia</strain>
    </source>
</reference>
<reference key="2">
    <citation type="journal article" date="2017" name="Plant J.">
        <title>Araport11: a complete reannotation of the Arabidopsis thaliana reference genome.</title>
        <authorList>
            <person name="Cheng C.Y."/>
            <person name="Krishnakumar V."/>
            <person name="Chan A.P."/>
            <person name="Thibaud-Nissen F."/>
            <person name="Schobel S."/>
            <person name="Town C.D."/>
        </authorList>
    </citation>
    <scope>GENOME REANNOTATION</scope>
    <source>
        <strain>cv. Columbia</strain>
    </source>
</reference>
<reference key="3">
    <citation type="journal article" date="2004" name="New Phytol.">
        <title>Gene-specific expression and calcium activation of Arabidopsis thaliana phospholipase C isoforms.</title>
        <authorList>
            <person name="Hunt L."/>
            <person name="Otterhag L."/>
            <person name="Lee J.C."/>
            <person name="Lasheen T."/>
            <person name="Hunt J."/>
            <person name="Seki M."/>
            <person name="Shinozaki K."/>
            <person name="Sommarin M."/>
            <person name="Gilmour D.J."/>
            <person name="Pical C."/>
            <person name="Gray J.E."/>
        </authorList>
        <dbReference type="AGRICOLA" id="IND43668249"/>
    </citation>
    <scope>NUCLEOTIDE SEQUENCE [MRNA] (ISOFORM 2)</scope>
    <scope>FUNCTION</scope>
    <scope>TISSUE SPECIFICITY</scope>
    <source>
        <strain>cv. Columbia</strain>
    </source>
</reference>
<reference key="4">
    <citation type="journal article" date="2002" name="Plant Physiol.">
        <title>Inositol phospholipid metabolism in Arabidopsis. Characterized and putative isoforms of inositol phospholipid kinase and phosphoinositide-specific phospholipase C.</title>
        <authorList>
            <person name="Mueller-Roeber B."/>
            <person name="Pical C."/>
        </authorList>
    </citation>
    <scope>GENE FAMILY</scope>
    <scope>NOMENCLATURE</scope>
</reference>
<reference key="5">
    <citation type="journal article" date="2003" name="Mol. Cell. Proteomics">
        <title>Large-scale analysis of in vivo phosphorylated membrane proteins by immobilized metal ion affinity chromatography and mass spectrometry.</title>
        <authorList>
            <person name="Nuehse T.S."/>
            <person name="Stensballe A."/>
            <person name="Jensen O.N."/>
            <person name="Peck S.C."/>
        </authorList>
    </citation>
    <scope>PHOSPHORYLATION [LARGE SCALE ANALYSIS] AT SER-287</scope>
    <scope>IDENTIFICATION BY MASS SPECTROMETRY [LARGE SCALE ANALYSIS]</scope>
    <source>
        <strain>cv. La-0</strain>
    </source>
</reference>
<reference key="6">
    <citation type="journal article" date="2004" name="Plant Cell">
        <title>Phosphoproteomics of the Arabidopsis plasma membrane and a new phosphorylation site database.</title>
        <authorList>
            <person name="Nuehse T.S."/>
            <person name="Stensballe A."/>
            <person name="Jensen O.N."/>
            <person name="Peck S.C."/>
        </authorList>
    </citation>
    <scope>IDENTIFICATION BY MASS SPECTROMETRY [LARGE SCALE ANALYSIS]</scope>
</reference>
<accession>Q9LY51</accession>
<keyword id="KW-0025">Alternative splicing</keyword>
<keyword id="KW-1003">Cell membrane</keyword>
<keyword id="KW-0378">Hydrolase</keyword>
<keyword id="KW-0442">Lipid degradation</keyword>
<keyword id="KW-0443">Lipid metabolism</keyword>
<keyword id="KW-0472">Membrane</keyword>
<keyword id="KW-0597">Phosphoprotein</keyword>
<keyword id="KW-1185">Reference proteome</keyword>
<keyword id="KW-0807">Transducer</keyword>
<evidence type="ECO:0000250" key="1"/>
<evidence type="ECO:0000255" key="2">
    <source>
        <dbReference type="PROSITE-ProRule" id="PRU00041"/>
    </source>
</evidence>
<evidence type="ECO:0000255" key="3">
    <source>
        <dbReference type="PROSITE-ProRule" id="PRU00270"/>
    </source>
</evidence>
<evidence type="ECO:0000255" key="4">
    <source>
        <dbReference type="PROSITE-ProRule" id="PRU00271"/>
    </source>
</evidence>
<evidence type="ECO:0000256" key="5">
    <source>
        <dbReference type="SAM" id="MobiDB-lite"/>
    </source>
</evidence>
<evidence type="ECO:0000269" key="6">
    <source ref="3"/>
</evidence>
<evidence type="ECO:0000303" key="7">
    <source ref="3"/>
</evidence>
<evidence type="ECO:0000305" key="8"/>
<evidence type="ECO:0007744" key="9">
    <source>
    </source>
</evidence>
<gene>
    <name type="primary">PLC7</name>
    <name type="synonym">PLC10</name>
    <name type="ordered locus">At3g55940</name>
    <name type="ORF">F27K19.120</name>
</gene>
<protein>
    <recommendedName>
        <fullName>Phosphoinositide phospholipase C 7</fullName>
        <ecNumber>3.1.4.11</ecNumber>
    </recommendedName>
    <alternativeName>
        <fullName>Phosphoinositide phospholipase PLC7</fullName>
        <shortName>AtPLC10</shortName>
        <shortName>AtPLC7</shortName>
        <shortName>PI-PLC7</shortName>
    </alternativeName>
</protein>
<sequence length="584" mass="66462">MSKQTYKVCFCFRRRYRHTVSVAPAEIKTLFDNYSDKGLMTTDLLLRFLIDVQKQDKATKEEAQDIVNASSSLLHRNGLHLDAFFKYLFAVTNSPLSSLEVHQDMDAPLSHYFIYTGHNSYLTGNQLSSDCSELPIIEALKKGVRVIELDIWPNSDEDGIDVLHGRTLTSPVELIKCLRAIREHAFDVSDYPVVVTLEDHLTPKLQAKVAEMVTDIFGEMLFTPPSGECLKEFPSPAFLKKRIMISTKPPKEYKAATDDDLVKKGRDLGDKEVWGREVPSFIRRDRSVDKNDSNGDDDDDDDDDDDDDDGDDKIKKNAPPEYKHLIAIEAGKPKGGITECLKVDPDKVRRLSLSEEQLEKASEKYAKQIVRFTQRNLLRVYPKGTRITSSNYNPLIAWSHGAQMVAFNMQGLGRSLWVMQGMFRGNGGCGYIKKPDLLLKSNAVFDPEATLPVKTTLRVTIYMGEGWYYDFPHTHFDRYSPPDFYTRVGIAGVPADTVMKKTKTLEDNWIPAWDEVFEFPLTVPELALLRIEVHEYDMSEKDDFGGQICLPVWELRQGIRAVPLRNQDGVKCRSVKLLVRLEFV</sequence>
<organism>
    <name type="scientific">Arabidopsis thaliana</name>
    <name type="common">Mouse-ear cress</name>
    <dbReference type="NCBI Taxonomy" id="3702"/>
    <lineage>
        <taxon>Eukaryota</taxon>
        <taxon>Viridiplantae</taxon>
        <taxon>Streptophyta</taxon>
        <taxon>Embryophyta</taxon>
        <taxon>Tracheophyta</taxon>
        <taxon>Spermatophyta</taxon>
        <taxon>Magnoliopsida</taxon>
        <taxon>eudicotyledons</taxon>
        <taxon>Gunneridae</taxon>
        <taxon>Pentapetalae</taxon>
        <taxon>rosids</taxon>
        <taxon>malvids</taxon>
        <taxon>Brassicales</taxon>
        <taxon>Brassicaceae</taxon>
        <taxon>Camelineae</taxon>
        <taxon>Arabidopsis</taxon>
    </lineage>
</organism>
<proteinExistence type="evidence at protein level"/>